<comment type="function">
    <text evidence="1">Catalyzes the formation of 6,7-dimethyl-8-ribityllumazine by condensation of 5-amino-6-(D-ribitylamino)uracil with 3,4-dihydroxy-2-butanone 4-phosphate. This is the penultimate step in the biosynthesis of riboflavin.</text>
</comment>
<comment type="catalytic activity">
    <reaction evidence="1">
        <text>(2S)-2-hydroxy-3-oxobutyl phosphate + 5-amino-6-(D-ribitylamino)uracil = 6,7-dimethyl-8-(1-D-ribityl)lumazine + phosphate + 2 H2O + H(+)</text>
        <dbReference type="Rhea" id="RHEA:26152"/>
        <dbReference type="ChEBI" id="CHEBI:15377"/>
        <dbReference type="ChEBI" id="CHEBI:15378"/>
        <dbReference type="ChEBI" id="CHEBI:15934"/>
        <dbReference type="ChEBI" id="CHEBI:43474"/>
        <dbReference type="ChEBI" id="CHEBI:58201"/>
        <dbReference type="ChEBI" id="CHEBI:58830"/>
        <dbReference type="EC" id="2.5.1.78"/>
    </reaction>
</comment>
<comment type="pathway">
    <text evidence="1">Cofactor biosynthesis; riboflavin biosynthesis; riboflavin from 2-hydroxy-3-oxobutyl phosphate and 5-amino-6-(D-ribitylamino)uracil: step 1/2.</text>
</comment>
<comment type="similarity">
    <text evidence="1">Belongs to the DMRL synthase family.</text>
</comment>
<dbReference type="EC" id="2.5.1.78" evidence="1"/>
<dbReference type="EMBL" id="AE007869">
    <property type="protein sequence ID" value="AAK86974.1"/>
    <property type="molecule type" value="Genomic_DNA"/>
</dbReference>
<dbReference type="PIR" id="AI2720">
    <property type="entry name" value="AI2720"/>
</dbReference>
<dbReference type="PIR" id="E97502">
    <property type="entry name" value="E97502"/>
</dbReference>
<dbReference type="RefSeq" id="NP_354189.1">
    <property type="nucleotide sequence ID" value="NC_003062.2"/>
</dbReference>
<dbReference type="RefSeq" id="WP_006312824.1">
    <property type="nucleotide sequence ID" value="NC_003062.2"/>
</dbReference>
<dbReference type="SMR" id="Q8UG70"/>
<dbReference type="STRING" id="176299.Atu1171"/>
<dbReference type="EnsemblBacteria" id="AAK86974">
    <property type="protein sequence ID" value="AAK86974"/>
    <property type="gene ID" value="Atu1171"/>
</dbReference>
<dbReference type="GeneID" id="1133209"/>
<dbReference type="KEGG" id="atu:Atu1171"/>
<dbReference type="PATRIC" id="fig|176299.10.peg.1191"/>
<dbReference type="eggNOG" id="COG0054">
    <property type="taxonomic scope" value="Bacteria"/>
</dbReference>
<dbReference type="HOGENOM" id="CLU_089358_1_2_5"/>
<dbReference type="OrthoDB" id="9809709at2"/>
<dbReference type="PhylomeDB" id="Q8UG70"/>
<dbReference type="BioCyc" id="AGRO:ATU1171-MONOMER"/>
<dbReference type="BRENDA" id="2.5.1.78">
    <property type="organism ID" value="200"/>
</dbReference>
<dbReference type="UniPathway" id="UPA00275">
    <property type="reaction ID" value="UER00404"/>
</dbReference>
<dbReference type="Proteomes" id="UP000000813">
    <property type="component" value="Chromosome circular"/>
</dbReference>
<dbReference type="GO" id="GO:0005829">
    <property type="term" value="C:cytosol"/>
    <property type="evidence" value="ECO:0007669"/>
    <property type="project" value="TreeGrafter"/>
</dbReference>
<dbReference type="GO" id="GO:0009349">
    <property type="term" value="C:riboflavin synthase complex"/>
    <property type="evidence" value="ECO:0007669"/>
    <property type="project" value="InterPro"/>
</dbReference>
<dbReference type="GO" id="GO:0000906">
    <property type="term" value="F:6,7-dimethyl-8-ribityllumazine synthase activity"/>
    <property type="evidence" value="ECO:0007669"/>
    <property type="project" value="UniProtKB-UniRule"/>
</dbReference>
<dbReference type="GO" id="GO:0009231">
    <property type="term" value="P:riboflavin biosynthetic process"/>
    <property type="evidence" value="ECO:0007669"/>
    <property type="project" value="UniProtKB-UniRule"/>
</dbReference>
<dbReference type="CDD" id="cd09209">
    <property type="entry name" value="Lumazine_synthase-I"/>
    <property type="match status" value="1"/>
</dbReference>
<dbReference type="Gene3D" id="3.40.50.960">
    <property type="entry name" value="Lumazine/riboflavin synthase"/>
    <property type="match status" value="1"/>
</dbReference>
<dbReference type="HAMAP" id="MF_00178">
    <property type="entry name" value="Lumazine_synth"/>
    <property type="match status" value="1"/>
</dbReference>
<dbReference type="InterPro" id="IPR034964">
    <property type="entry name" value="LS"/>
</dbReference>
<dbReference type="InterPro" id="IPR002180">
    <property type="entry name" value="LS/RS"/>
</dbReference>
<dbReference type="InterPro" id="IPR036467">
    <property type="entry name" value="LS/RS_sf"/>
</dbReference>
<dbReference type="NCBIfam" id="TIGR00114">
    <property type="entry name" value="lumazine-synth"/>
    <property type="match status" value="1"/>
</dbReference>
<dbReference type="NCBIfam" id="NF000814">
    <property type="entry name" value="PRK00061.2-2"/>
    <property type="match status" value="1"/>
</dbReference>
<dbReference type="PANTHER" id="PTHR21058:SF0">
    <property type="entry name" value="6,7-DIMETHYL-8-RIBITYLLUMAZINE SYNTHASE"/>
    <property type="match status" value="1"/>
</dbReference>
<dbReference type="PANTHER" id="PTHR21058">
    <property type="entry name" value="6,7-DIMETHYL-8-RIBITYLLUMAZINE SYNTHASE DMRL SYNTHASE LUMAZINE SYNTHASE"/>
    <property type="match status" value="1"/>
</dbReference>
<dbReference type="Pfam" id="PF00885">
    <property type="entry name" value="DMRL_synthase"/>
    <property type="match status" value="1"/>
</dbReference>
<dbReference type="SUPFAM" id="SSF52121">
    <property type="entry name" value="Lumazine synthase"/>
    <property type="match status" value="1"/>
</dbReference>
<evidence type="ECO:0000255" key="1">
    <source>
        <dbReference type="HAMAP-Rule" id="MF_00178"/>
    </source>
</evidence>
<proteinExistence type="inferred from homology"/>
<keyword id="KW-1185">Reference proteome</keyword>
<keyword id="KW-0686">Riboflavin biosynthesis</keyword>
<keyword id="KW-0808">Transferase</keyword>
<reference key="1">
    <citation type="journal article" date="2001" name="Science">
        <title>The genome of the natural genetic engineer Agrobacterium tumefaciens C58.</title>
        <authorList>
            <person name="Wood D.W."/>
            <person name="Setubal J.C."/>
            <person name="Kaul R."/>
            <person name="Monks D.E."/>
            <person name="Kitajima J.P."/>
            <person name="Okura V.K."/>
            <person name="Zhou Y."/>
            <person name="Chen L."/>
            <person name="Wood G.E."/>
            <person name="Almeida N.F. Jr."/>
            <person name="Woo L."/>
            <person name="Chen Y."/>
            <person name="Paulsen I.T."/>
            <person name="Eisen J.A."/>
            <person name="Karp P.D."/>
            <person name="Bovee D. Sr."/>
            <person name="Chapman P."/>
            <person name="Clendenning J."/>
            <person name="Deatherage G."/>
            <person name="Gillet W."/>
            <person name="Grant C."/>
            <person name="Kutyavin T."/>
            <person name="Levy R."/>
            <person name="Li M.-J."/>
            <person name="McClelland E."/>
            <person name="Palmieri A."/>
            <person name="Raymond C."/>
            <person name="Rouse G."/>
            <person name="Saenphimmachak C."/>
            <person name="Wu Z."/>
            <person name="Romero P."/>
            <person name="Gordon D."/>
            <person name="Zhang S."/>
            <person name="Yoo H."/>
            <person name="Tao Y."/>
            <person name="Biddle P."/>
            <person name="Jung M."/>
            <person name="Krespan W."/>
            <person name="Perry M."/>
            <person name="Gordon-Kamm B."/>
            <person name="Liao L."/>
            <person name="Kim S."/>
            <person name="Hendrick C."/>
            <person name="Zhao Z.-Y."/>
            <person name="Dolan M."/>
            <person name="Chumley F."/>
            <person name="Tingey S.V."/>
            <person name="Tomb J.-F."/>
            <person name="Gordon M.P."/>
            <person name="Olson M.V."/>
            <person name="Nester E.W."/>
        </authorList>
    </citation>
    <scope>NUCLEOTIDE SEQUENCE [LARGE SCALE GENOMIC DNA]</scope>
    <source>
        <strain>C58 / ATCC 33970</strain>
    </source>
</reference>
<reference key="2">
    <citation type="journal article" date="2001" name="Science">
        <title>Genome sequence of the plant pathogen and biotechnology agent Agrobacterium tumefaciens C58.</title>
        <authorList>
            <person name="Goodner B."/>
            <person name="Hinkle G."/>
            <person name="Gattung S."/>
            <person name="Miller N."/>
            <person name="Blanchard M."/>
            <person name="Qurollo B."/>
            <person name="Goldman B.S."/>
            <person name="Cao Y."/>
            <person name="Askenazi M."/>
            <person name="Halling C."/>
            <person name="Mullin L."/>
            <person name="Houmiel K."/>
            <person name="Gordon J."/>
            <person name="Vaudin M."/>
            <person name="Iartchouk O."/>
            <person name="Epp A."/>
            <person name="Liu F."/>
            <person name="Wollam C."/>
            <person name="Allinger M."/>
            <person name="Doughty D."/>
            <person name="Scott C."/>
            <person name="Lappas C."/>
            <person name="Markelz B."/>
            <person name="Flanagan C."/>
            <person name="Crowell C."/>
            <person name="Gurson J."/>
            <person name="Lomo C."/>
            <person name="Sear C."/>
            <person name="Strub G."/>
            <person name="Cielo C."/>
            <person name="Slater S."/>
        </authorList>
    </citation>
    <scope>NUCLEOTIDE SEQUENCE [LARGE SCALE GENOMIC DNA]</scope>
    <source>
        <strain>C58 / ATCC 33970</strain>
    </source>
</reference>
<protein>
    <recommendedName>
        <fullName evidence="1">6,7-dimethyl-8-ribityllumazine synthase</fullName>
        <shortName evidence="1">DMRL synthase</shortName>
        <shortName evidence="1">LS</shortName>
        <shortName evidence="1">Lumazine synthase</shortName>
        <ecNumber evidence="1">2.5.1.78</ecNumber>
    </recommendedName>
</protein>
<feature type="chain" id="PRO_0000134706" description="6,7-dimethyl-8-ribityllumazine synthase">
    <location>
        <begin position="1"/>
        <end position="148"/>
    </location>
</feature>
<feature type="active site" description="Proton donor" evidence="1">
    <location>
        <position position="81"/>
    </location>
</feature>
<feature type="binding site" evidence="1">
    <location>
        <position position="13"/>
    </location>
    <ligand>
        <name>5-amino-6-(D-ribitylamino)uracil</name>
        <dbReference type="ChEBI" id="CHEBI:15934"/>
    </ligand>
</feature>
<feature type="binding site" evidence="1">
    <location>
        <begin position="44"/>
        <end position="46"/>
    </location>
    <ligand>
        <name>5-amino-6-(D-ribitylamino)uracil</name>
        <dbReference type="ChEBI" id="CHEBI:15934"/>
    </ligand>
</feature>
<feature type="binding site" evidence="1">
    <location>
        <begin position="73"/>
        <end position="75"/>
    </location>
    <ligand>
        <name>5-amino-6-(D-ribitylamino)uracil</name>
        <dbReference type="ChEBI" id="CHEBI:15934"/>
    </ligand>
</feature>
<feature type="binding site" evidence="1">
    <location>
        <begin position="78"/>
        <end position="79"/>
    </location>
    <ligand>
        <name>(2S)-2-hydroxy-3-oxobutyl phosphate</name>
        <dbReference type="ChEBI" id="CHEBI:58830"/>
    </ligand>
</feature>
<feature type="binding site" evidence="1">
    <location>
        <position position="106"/>
    </location>
    <ligand>
        <name>5-amino-6-(D-ribitylamino)uracil</name>
        <dbReference type="ChEBI" id="CHEBI:15934"/>
    </ligand>
</feature>
<feature type="binding site" evidence="1">
    <location>
        <position position="120"/>
    </location>
    <ligand>
        <name>(2S)-2-hydroxy-3-oxobutyl phosphate</name>
        <dbReference type="ChEBI" id="CHEBI:58830"/>
    </ligand>
</feature>
<accession>Q8UG70</accession>
<gene>
    <name evidence="1" type="primary">ribH</name>
    <name type="ordered locus">Atu1171</name>
    <name type="ORF">AGR_C_2165</name>
</gene>
<name>RISB_AGRFC</name>
<sequence length="148" mass="15850">MSKPHLLIVEARFYDDMADALLEGAKFALEEAGATYDVITVPGALEIPAAIAMALDGADNDGTEYDGFVALGMVIRGETYHFDIVSNESSRALMDLAVSESLPIGNGILTVENDEQAWARVRRSDKDKGGFAARAALTMIELKKKLGG</sequence>
<organism>
    <name type="scientific">Agrobacterium fabrum (strain C58 / ATCC 33970)</name>
    <name type="common">Agrobacterium tumefaciens (strain C58)</name>
    <dbReference type="NCBI Taxonomy" id="176299"/>
    <lineage>
        <taxon>Bacteria</taxon>
        <taxon>Pseudomonadati</taxon>
        <taxon>Pseudomonadota</taxon>
        <taxon>Alphaproteobacteria</taxon>
        <taxon>Hyphomicrobiales</taxon>
        <taxon>Rhizobiaceae</taxon>
        <taxon>Rhizobium/Agrobacterium group</taxon>
        <taxon>Agrobacterium</taxon>
        <taxon>Agrobacterium tumefaciens complex</taxon>
    </lineage>
</organism>